<name>MATK_ERYCG</name>
<keyword id="KW-0150">Chloroplast</keyword>
<keyword id="KW-0507">mRNA processing</keyword>
<keyword id="KW-0934">Plastid</keyword>
<keyword id="KW-0694">RNA-binding</keyword>
<keyword id="KW-0819">tRNA processing</keyword>
<geneLocation type="chloroplast"/>
<gene>
    <name evidence="1" type="primary">matK</name>
</gene>
<evidence type="ECO:0000255" key="1">
    <source>
        <dbReference type="HAMAP-Rule" id="MF_01390"/>
    </source>
</evidence>
<comment type="function">
    <text evidence="1">Usually encoded in the trnK tRNA gene intron. Probably assists in splicing its own and other chloroplast group II introns.</text>
</comment>
<comment type="subcellular location">
    <subcellularLocation>
        <location>Plastid</location>
        <location>Chloroplast</location>
    </subcellularLocation>
</comment>
<comment type="similarity">
    <text evidence="1">Belongs to the intron maturase 2 family. MatK subfamily.</text>
</comment>
<proteinExistence type="inferred from homology"/>
<sequence>MEEYQVYLKLHRSRHQDLLYPLFFRESIYRLAYGHGSFFVENVGYNKKWSLLIVKRLITRMYQQIDLIIFANDSNKNPFGDSNKNFYSLIILEGFVVVVEIRFSLQFWISSLKELEIVKSYNTLRSISSIFPFFEDKLIYLNHESDIRIPYPIHLEILVQILRYWIKDVFFFHFLRLFFYYYFNSTSVFTPKKDISISFSKSNPRFFLFLYNLYVWEYESIFLFLRNKSSQLRFKYFRVFFERIFFYEKIEHLLEISAKDCLYTLSFFKDPFIHYVRYQGKSIFVSKNTPLLIKKWKYYFIYLWQCHFDIWSRSETIYLNQLSQHSFNFLGYFLSIRLNVSVVRSQMLQNSFLIQIFIKKLDTIVRILPLIRLLAKEKFCNILGHPISKPVWVNLSDFDIIDRFLQICRNFSHYYNGSEKKKSLYQIKYILRLSCIKTLARKHKSTVRTFLKRLGSEKLLEEFFTEEDIFSLIFPRTSFTLQRLYRDRIWYLDILFRNDLVNHS</sequence>
<protein>
    <recommendedName>
        <fullName evidence="1">Maturase K</fullName>
    </recommendedName>
    <alternativeName>
        <fullName evidence="1">Intron maturase</fullName>
    </alternativeName>
</protein>
<reference key="1">
    <citation type="journal article" date="2004" name="Am. J. Bot.">
        <title>A phylogeny of legumes (Leguminosae) based on analysis of the plastid matK gene resolves many well-supported subclades within the family.</title>
        <authorList>
            <person name="Wojciechowski M.F."/>
            <person name="Lavin M."/>
            <person name="Sanderson M.J."/>
        </authorList>
        <dbReference type="AGRICOLA" id="IND43661289"/>
    </citation>
    <scope>NUCLEOTIDE SEQUENCE [GENOMIC DNA]</scope>
</reference>
<accession>Q5YK33</accession>
<organism>
    <name type="scientific">Erythrina crista-galli</name>
    <name type="common">Cockspur coral tree</name>
    <name type="synonym">Micropteryx crista-galli</name>
    <dbReference type="NCBI Taxonomy" id="49817"/>
    <lineage>
        <taxon>Eukaryota</taxon>
        <taxon>Viridiplantae</taxon>
        <taxon>Streptophyta</taxon>
        <taxon>Embryophyta</taxon>
        <taxon>Tracheophyta</taxon>
        <taxon>Spermatophyta</taxon>
        <taxon>Magnoliopsida</taxon>
        <taxon>eudicotyledons</taxon>
        <taxon>Gunneridae</taxon>
        <taxon>Pentapetalae</taxon>
        <taxon>rosids</taxon>
        <taxon>fabids</taxon>
        <taxon>Fabales</taxon>
        <taxon>Fabaceae</taxon>
        <taxon>Papilionoideae</taxon>
        <taxon>50 kb inversion clade</taxon>
        <taxon>NPAAA clade</taxon>
        <taxon>indigoferoid/millettioid clade</taxon>
        <taxon>Phaseoleae</taxon>
        <taxon>Erythrina</taxon>
    </lineage>
</organism>
<dbReference type="EMBL" id="AY386869">
    <property type="protein sequence ID" value="AAQ91947.1"/>
    <property type="molecule type" value="Genomic_DNA"/>
</dbReference>
<dbReference type="GO" id="GO:0009507">
    <property type="term" value="C:chloroplast"/>
    <property type="evidence" value="ECO:0007669"/>
    <property type="project" value="UniProtKB-SubCell"/>
</dbReference>
<dbReference type="GO" id="GO:0003723">
    <property type="term" value="F:RNA binding"/>
    <property type="evidence" value="ECO:0007669"/>
    <property type="project" value="UniProtKB-KW"/>
</dbReference>
<dbReference type="GO" id="GO:0006397">
    <property type="term" value="P:mRNA processing"/>
    <property type="evidence" value="ECO:0007669"/>
    <property type="project" value="UniProtKB-KW"/>
</dbReference>
<dbReference type="GO" id="GO:0008380">
    <property type="term" value="P:RNA splicing"/>
    <property type="evidence" value="ECO:0007669"/>
    <property type="project" value="UniProtKB-UniRule"/>
</dbReference>
<dbReference type="GO" id="GO:0008033">
    <property type="term" value="P:tRNA processing"/>
    <property type="evidence" value="ECO:0007669"/>
    <property type="project" value="UniProtKB-KW"/>
</dbReference>
<dbReference type="HAMAP" id="MF_01390">
    <property type="entry name" value="MatK"/>
    <property type="match status" value="1"/>
</dbReference>
<dbReference type="InterPro" id="IPR024937">
    <property type="entry name" value="Domain_X"/>
</dbReference>
<dbReference type="InterPro" id="IPR002866">
    <property type="entry name" value="Maturase_MatK"/>
</dbReference>
<dbReference type="InterPro" id="IPR024942">
    <property type="entry name" value="Maturase_MatK_N"/>
</dbReference>
<dbReference type="PANTHER" id="PTHR34811">
    <property type="entry name" value="MATURASE K"/>
    <property type="match status" value="1"/>
</dbReference>
<dbReference type="PANTHER" id="PTHR34811:SF1">
    <property type="entry name" value="MATURASE K"/>
    <property type="match status" value="1"/>
</dbReference>
<dbReference type="Pfam" id="PF01348">
    <property type="entry name" value="Intron_maturas2"/>
    <property type="match status" value="1"/>
</dbReference>
<dbReference type="Pfam" id="PF01824">
    <property type="entry name" value="MatK_N"/>
    <property type="match status" value="1"/>
</dbReference>
<feature type="chain" id="PRO_0000143377" description="Maturase K">
    <location>
        <begin position="1"/>
        <end position="504"/>
    </location>
</feature>